<proteinExistence type="evidence at transcript level"/>
<name>GME72_PESMI</name>
<organism>
    <name type="scientific">Pestalotiopsis microspora</name>
    <dbReference type="NCBI Taxonomy" id="85828"/>
    <lineage>
        <taxon>Eukaryota</taxon>
        <taxon>Fungi</taxon>
        <taxon>Dikarya</taxon>
        <taxon>Ascomycota</taxon>
        <taxon>Pezizomycotina</taxon>
        <taxon>Sordariomycetes</taxon>
        <taxon>Xylariomycetidae</taxon>
        <taxon>Amphisphaeriales</taxon>
        <taxon>Sporocadaceae</taxon>
        <taxon>Pestalotiopsis</taxon>
    </lineage>
</organism>
<evidence type="ECO:0000250" key="1">
    <source>
        <dbReference type="UniProtKB" id="P56221"/>
    </source>
</evidence>
<evidence type="ECO:0000269" key="2">
    <source>
    </source>
</evidence>
<evidence type="ECO:0000269" key="3">
    <source>
    </source>
</evidence>
<evidence type="ECO:0000303" key="4">
    <source>
    </source>
</evidence>
<evidence type="ECO:0000305" key="5"/>
<evidence type="ECO:0000305" key="6">
    <source>
    </source>
</evidence>
<reference key="1">
    <citation type="journal article" date="2019" name="J. Microbiol. Biotechnol.">
        <title>A gene cluster for the biosynthesis of dibenzodioxocinons in the endophyte Pestalotiopsis microspora, a taxol producer.</title>
        <authorList>
            <person name="Liu Y."/>
            <person name="Chen L."/>
            <person name="Xie Q."/>
            <person name="Yu X."/>
            <person name="Duan A."/>
            <person name="Lin Y."/>
            <person name="Xiang B."/>
            <person name="Hao X."/>
            <person name="Chen W."/>
            <person name="Zhu X."/>
        </authorList>
    </citation>
    <scope>NUCLEOTIDE SEQUENCE [MRNA]</scope>
    <scope>FUNCTION</scope>
    <scope>PATHWAY</scope>
    <source>
        <strain>NK17</strain>
    </source>
</reference>
<reference key="2">
    <citation type="journal article" date="2022" name="Microbiol. Res.">
        <title>Acquiring novel chemicals by overexpression of a transcription factor DibT in the dibenzodioxocinone biosynthetic cluster in Pestalotiopsis microspora.</title>
        <authorList>
            <person name="Liu Y."/>
            <person name="Fu Y."/>
            <person name="Zhou M."/>
            <person name="Hao X."/>
            <person name="Zhang P."/>
            <person name="Zhu X."/>
        </authorList>
    </citation>
    <scope>INDUCTION</scope>
</reference>
<accession>A0A5B8YW48</accession>
<protein>
    <recommendedName>
        <fullName evidence="4">Dehydratase GME11372</fullName>
        <ecNumber evidence="6">4.2.1.-</ecNumber>
    </recommendedName>
    <alternativeName>
        <fullName evidence="4">Dibenzodioxocinones biosynthesis cluster protein GME11372</fullName>
    </alternativeName>
</protein>
<comment type="function">
    <text evidence="2 6">Dehydratase; part of the gene cluster that mediates the biosynthesis of dibenzodioxocinones such as pestalotiollide B, a novel class of inhibitors against cholesterol ester transfer protein (CEPT) (PubMed:31474098). The biosynthesis initiates from condensation of acetate and malonate units catalyzed by the non-reducing PKS pks8/GME11356. Pks8/GME11356 lacks a thioesterase (TE) domain, which is important to the cyclizing of the third ring of atrochrysone carboxylic acid, and the esterase GME11355 might play the role of TE and catalyzes the cyclization reaction of the C ring. The lactamase-like protein GME11357 (or other beta-lactamases in Pestalotiopsis microspora) probably hydrolyzes the thioester bond between the ACP of pks8/GME11356 and the intermediate to release atrochrysone carboxylic acid, which is spontaneously dehydrates to form endocrocin anthrone. Endocrocin anthrone is further converted to emodin via the endocrocin intermediate. Emodin is then oxidized by several enzymes such as the Baeyer-Villiger oxidase GME11358, the oxidoreductase GME11367, the short chain dehydrogenase/reductase GME11373, as well as by other oxidoreductases from the cluster, to modify the A and C rings and open the B ring, and finally yield monodictyphenone. The prenyltransferase GME11375 may catalyze the addition reaction between the C5 side chains and the carbon bone of dibenzodioxocinones. The remaining biochemical reactions to the final product dibenzodioxocinones should be methylation catalyzed by methyltransferase GME11366 and reduction and lactonization reaction catalyzed by a series of oxidordeuctases (Probable).</text>
</comment>
<comment type="pathway">
    <text evidence="6">Secondary metabolite biosynthesis.</text>
</comment>
<comment type="subunit">
    <text evidence="1">Homotrimer (By similarity). Each subunit contains an active site, located in the central part of the hydrophobic core of the monomer, which functions independently (By similarity).</text>
</comment>
<comment type="induction">
    <text evidence="3">The expression of the dibenzodioxocinones biosynthesis cluster is positively regulated by the transcription factor dibT.</text>
</comment>
<comment type="similarity">
    <text evidence="5">Belongs to the scytalone dehydratase family.</text>
</comment>
<sequence length="159" mass="18077">MSSQPAADDVIGCLAAVYDWAESFDTKDWDRLRTVLAPTMRIDYTQVMGKIWESMPADDFIPLASDPKFLGNPLLKTQHFIGASKWEKTSDDEITGRHQVRVAHQRYADSGMKEVAKKGHAHGGATTWFKRVDGVWKFAGLCPDIRWSEYNYDEMFGEN</sequence>
<keyword id="KW-0456">Lyase</keyword>
<feature type="chain" id="PRO_0000456749" description="Dehydratase GME11372">
    <location>
        <begin position="1"/>
        <end position="159"/>
    </location>
</feature>
<feature type="active site" evidence="1">
    <location>
        <position position="79"/>
    </location>
</feature>
<feature type="active site" evidence="1">
    <location>
        <position position="104"/>
    </location>
</feature>
<gene>
    <name evidence="4" type="ORF">GME11372</name>
</gene>
<dbReference type="EC" id="4.2.1.-" evidence="6"/>
<dbReference type="EMBL" id="MK590991">
    <property type="protein sequence ID" value="QED41503.1"/>
    <property type="molecule type" value="mRNA"/>
</dbReference>
<dbReference type="SMR" id="A0A5B8YW48"/>
<dbReference type="GO" id="GO:0030411">
    <property type="term" value="F:scytalone dehydratase activity"/>
    <property type="evidence" value="ECO:0007669"/>
    <property type="project" value="InterPro"/>
</dbReference>
<dbReference type="GO" id="GO:0006582">
    <property type="term" value="P:melanin metabolic process"/>
    <property type="evidence" value="ECO:0007669"/>
    <property type="project" value="InterPro"/>
</dbReference>
<dbReference type="Gene3D" id="3.10.450.50">
    <property type="match status" value="1"/>
</dbReference>
<dbReference type="InterPro" id="IPR032710">
    <property type="entry name" value="NTF2-like_dom_sf"/>
</dbReference>
<dbReference type="InterPro" id="IPR004235">
    <property type="entry name" value="Scytalone_dehydratase"/>
</dbReference>
<dbReference type="InterPro" id="IPR049884">
    <property type="entry name" value="Scytalone_dh"/>
</dbReference>
<dbReference type="Pfam" id="PF02982">
    <property type="entry name" value="Scytalone_dh"/>
    <property type="match status" value="1"/>
</dbReference>
<dbReference type="PIRSF" id="PIRSF024851">
    <property type="entry name" value="SCD1"/>
    <property type="match status" value="1"/>
</dbReference>
<dbReference type="SUPFAM" id="SSF54427">
    <property type="entry name" value="NTF2-like"/>
    <property type="match status" value="1"/>
</dbReference>